<sequence>MKSLLNAFTKKEVPFREAPAYSNRRRRPPNTLAAPRVLLRSNSDNNLNAGAPEWAVCSAATSHRSLSPQLLQQTPSKPDGATKSLGSYTPGPRSRSPSLNRLGGTAEDGKRTQPHWHVGSPFTPGANKDSLSTFEYPGPRRKLYSAVPGRLFVAVKPYQPQVDGEIPLHRGDRVKVLSIGEGGFWEGSARGHIGWFPAECVEEVQCKPRDSQAETRADRSKKLFRHYTVGSYDSFDAASDCIIEDKTVVLQKKDNEGFGFVLRGAKADTPIEEFTPTPAFPALQYLESVDEGGVAWQAGLRTGDFLIEVNNENVVKVGHRQVVNMIRQGGNHLILKVVTVTRNLDPDDTARKKAPPPPKRAPTTALTLRSKSMTAELEELGLSLVDKASVRKKKDKPEEIVPASKPSRTAENVAIESRVATIKQRPTSRCFPAASDVNSVYERQGIAVMTPTVPGSPKGPFLGLPRGTMRRQKSIDSRIFLSGITEEERQFLAPPMLKFTRSLSMPDTSEDIPPPPQSVPPSPPPPSPTTYNCPRSPTPRVYGTIKPAFNQNPVVAKVPPATRSDTVATMMREKGMFYRRELDRFSLDSEDVYSRSPAPQAAFRTKRGQMPENPYSEVGKIASKAVYVPAKPARRKGVLVKQSNVEDSPEKTCSIPIPTIIVKEPSTSSSGKSSQGSSMEIDPQATEPGQLRPDDSLTVSSPFAAAIAGAVRDREKRLEARRNSPAFLSTDLGDEDVGLGPPAPRMQASKFPEEGGFGDEDETEQPLLPTPGAAPRELENHFLGGGEAGAQGEAGGPLSSTSKAKGPESGPAAPLKSSSPAGPENYVHPLTGRLLDPSSPLALALSARDRAMQESQQGHKGEAPKADLNKPLYIDTKMRPSVESGFPPVTRQNTRGPLRRQETENKYETDLGKDRRADDKKNMLINIVDTAQQKSAGLLMVHTVDVPMAGPPLEEEEDREDGDTKPDHSPSTVPEGVPKTEGALQISAAPEPAVAPGRTIVAAGSVEEAVILPFRIPPPPLASVDLDEDFLFTEPLPPPLEFANSFDIPDDRAASVPALADLVKQKKNDTSQPPTLNSSQPANSTDSKKPAGISNCLPSSFLPPPESFDAVTDSGIEEVDSRSSSDHHLETTSTISTVSSISTLSSEGGESMDTCTVYADGQAFVVDKPPVPPKPKMKPIVHKSNALYQDTLPEEDTDGFVIPPPAPPPPPGSAQAGVAKVIQPRTSKLWGDVPEVKSPILSGPKANVISELNSILQQMNRGKSVKPGEGLELPVGAKSANLAPRSPEVMSTVSGTRSTTVTFTVRPGTSQPITLQSRPPDYESRTSGPRRAPSPVVSPTELSKEILPTPPPPSATAASPSPTLSDVFSLPSQSPAGDLFGLNPAGRSRSPSPSILQQPISNKPFTTKPVHLWTKPDVADWLESLNLGEHKETFMDNEIDGSHLPNLQKEDLIDLGVTRVGHRMNIERALKQLLDR</sequence>
<comment type="function">
    <text evidence="1">Seems to be an adapter protein in the postsynaptic density (PSD) of excitatory synapses that interconnects receptors of the postsynaptic membrane including NMDA-type and metabotropic glutamate receptors, and the actin-based cytoskeleton. May play a role in the structural and functional organization of the dendritic spine and synaptic junction (By similarity).</text>
</comment>
<comment type="subunit">
    <text evidence="7 9">Is part of a complex with DLG4/PSD-95 and DLGAP1/GKAP. Interacts with CTTN/cortactin SH3 domain, DLGAP1/GKAP and alpha-latrotoxin receptor 1. Interacts with DNM2, DBNL, GRID2, BAIAP2, SLC9A3, PLCB3 and CFTR. Interacts (via proline-rich region) with PDE4D. Interacts with ABI1 (via SH3 domain).</text>
</comment>
<comment type="interaction">
    <interactant intactId="EBI-770338">
        <id>Q80Z38</id>
    </interactant>
    <interactant intactId="EBI-771526">
        <id>Q6P9K8</id>
        <label>Caskin1</label>
    </interactant>
    <organismsDiffer>false</organismsDiffer>
    <experiments>2</experiments>
</comment>
<comment type="interaction">
    <interactant intactId="EBI-770338">
        <id>Q80Z38</id>
    </interactant>
    <interactant intactId="EBI-2794106">
        <id>Q61625</id>
        <label>Grid2</label>
    </interactant>
    <organismsDiffer>false</organismsDiffer>
    <experiments>10</experiments>
</comment>
<comment type="subcellular location">
    <subcellularLocation>
        <location evidence="1">Apical cell membrane</location>
    </subcellularLocation>
    <subcellularLocation>
        <location evidence="7">Cytoplasm</location>
    </subcellularLocation>
    <subcellularLocation>
        <location evidence="7">Synapse</location>
    </subcellularLocation>
    <subcellularLocation>
        <location evidence="7">Postsynaptic density</location>
    </subcellularLocation>
    <subcellularLocation>
        <location evidence="7">Cell projection</location>
        <location evidence="7">Dendritic spine</location>
    </subcellularLocation>
    <subcellularLocation>
        <location evidence="1">Cell projection</location>
        <location evidence="1">Growth cone</location>
    </subcellularLocation>
    <text evidence="1">Colocalizes with cortactin in growth cones in differentiating hippocampal neurons. Colocalized with PDE4D to the apical membrane of colonic crypt cells (By similarity). Present in the dendritic spines of cerebellar Purkinje cells.</text>
</comment>
<comment type="alternative products">
    <event type="alternative splicing"/>
    <isoform>
        <id>Q80Z38-1</id>
        <name>1</name>
        <name>E</name>
        <sequence type="displayed"/>
    </isoform>
    <isoform>
        <id>Q80Z38-2</id>
        <name>2</name>
        <sequence type="described" ref="VSP_020040"/>
    </isoform>
    <isoform>
        <id>Q80Z38-3</id>
        <name>3</name>
        <sequence type="described" ref="VSP_041614 VSP_041615 VSP_020040"/>
    </isoform>
</comment>
<comment type="tissue specificity">
    <text evidence="9 10 12">Detected in brain (at protein level), where it is highly expressed in Purkinje cells.</text>
</comment>
<comment type="domain">
    <text>The PDZ domain is required for interaction with GRID2, PLCB3, SLC9A3 and CFTR.</text>
</comment>
<comment type="disruption phenotype">
    <text evidence="11">Mutants are viable, but with reduced body weight and a lower survival rate compared to their wild-type littermates. They are extremely hiperactive and display profound autistic-like behavioral alterations including repetitive grooming as well as abnormalities in vocal and social behaviors. Mutants exhibit fewer dendritic spines and show reduced basal synaptic transmission, a reduced frequency of miniature excitatory postsynaptic currents and enhanced NMDA receptor-mediated excitatory currents at the physiological level. They also show a brain-region-specific up-regulation of ionotropic glutamate receptors and increased levels of SHANK3.</text>
</comment>
<comment type="similarity">
    <text evidence="15">Belongs to the SHANK family.</text>
</comment>
<organism>
    <name type="scientific">Mus musculus</name>
    <name type="common">Mouse</name>
    <dbReference type="NCBI Taxonomy" id="10090"/>
    <lineage>
        <taxon>Eukaryota</taxon>
        <taxon>Metazoa</taxon>
        <taxon>Chordata</taxon>
        <taxon>Craniata</taxon>
        <taxon>Vertebrata</taxon>
        <taxon>Euteleostomi</taxon>
        <taxon>Mammalia</taxon>
        <taxon>Eutheria</taxon>
        <taxon>Euarchontoglires</taxon>
        <taxon>Glires</taxon>
        <taxon>Rodentia</taxon>
        <taxon>Myomorpha</taxon>
        <taxon>Muroidea</taxon>
        <taxon>Muridae</taxon>
        <taxon>Murinae</taxon>
        <taxon>Mus</taxon>
        <taxon>Mus</taxon>
    </lineage>
</organism>
<dbReference type="EMBL" id="AB099695">
    <property type="protein sequence ID" value="BAC58120.1"/>
    <property type="molecule type" value="mRNA"/>
</dbReference>
<dbReference type="EMBL" id="AC124520">
    <property type="status" value="NOT_ANNOTATED_CDS"/>
    <property type="molecule type" value="Genomic_DNA"/>
</dbReference>
<dbReference type="EMBL" id="AC127546">
    <property type="status" value="NOT_ANNOTATED_CDS"/>
    <property type="molecule type" value="Genomic_DNA"/>
</dbReference>
<dbReference type="EMBL" id="AC140268">
    <property type="status" value="NOT_ANNOTATED_CDS"/>
    <property type="molecule type" value="Genomic_DNA"/>
</dbReference>
<dbReference type="EMBL" id="AC152166">
    <property type="status" value="NOT_ANNOTATED_CDS"/>
    <property type="molecule type" value="Genomic_DNA"/>
</dbReference>
<dbReference type="EMBL" id="BC167171">
    <property type="protein sequence ID" value="AAI67171.1"/>
    <property type="molecule type" value="mRNA"/>
</dbReference>
<dbReference type="EMBL" id="AK139360">
    <property type="protein sequence ID" value="BAE23976.1"/>
    <property type="molecule type" value="mRNA"/>
</dbReference>
<dbReference type="EMBL" id="AK220363">
    <property type="protein sequence ID" value="BAD90424.1"/>
    <property type="molecule type" value="mRNA"/>
</dbReference>
<dbReference type="CCDS" id="CCDS40201.1">
    <molecule id="Q80Z38-3"/>
</dbReference>
<dbReference type="CCDS" id="CCDS85484.1">
    <molecule id="Q80Z38-2"/>
</dbReference>
<dbReference type="RefSeq" id="NP_001074839.3">
    <molecule id="Q80Z38-3"/>
    <property type="nucleotide sequence ID" value="NM_001081370.3"/>
</dbReference>
<dbReference type="RefSeq" id="NP_001106844.3">
    <molecule id="Q80Z38-2"/>
    <property type="nucleotide sequence ID" value="NM_001113373.3"/>
</dbReference>
<dbReference type="RefSeq" id="XP_006508596.1">
    <molecule id="Q80Z38-1"/>
    <property type="nucleotide sequence ID" value="XM_006508533.3"/>
</dbReference>
<dbReference type="SMR" id="Q80Z38"/>
<dbReference type="BioGRID" id="229144">
    <property type="interactions" value="18"/>
</dbReference>
<dbReference type="CORUM" id="Q80Z38"/>
<dbReference type="FunCoup" id="Q80Z38">
    <property type="interactions" value="342"/>
</dbReference>
<dbReference type="IntAct" id="Q80Z38">
    <property type="interactions" value="18"/>
</dbReference>
<dbReference type="MINT" id="Q80Z38"/>
<dbReference type="STRING" id="10090.ENSMUSP00000101520"/>
<dbReference type="GlyCosmos" id="Q80Z38">
    <property type="glycosylation" value="1 site, No reported glycans"/>
</dbReference>
<dbReference type="GlyGen" id="Q80Z38">
    <property type="glycosylation" value="17 sites, 1 O-linked glycan (14 sites)"/>
</dbReference>
<dbReference type="iPTMnet" id="Q80Z38"/>
<dbReference type="PhosphoSitePlus" id="Q80Z38"/>
<dbReference type="SwissPalm" id="Q80Z38"/>
<dbReference type="jPOST" id="Q80Z38"/>
<dbReference type="PaxDb" id="10090-ENSMUSP00000101522"/>
<dbReference type="PeptideAtlas" id="Q80Z38"/>
<dbReference type="ProteomicsDB" id="261212">
    <molecule id="Q80Z38-1"/>
</dbReference>
<dbReference type="ProteomicsDB" id="261213">
    <molecule id="Q80Z38-2"/>
</dbReference>
<dbReference type="ProteomicsDB" id="261214">
    <molecule id="Q80Z38-3"/>
</dbReference>
<dbReference type="ABCD" id="Q80Z38">
    <property type="antibodies" value="1 sequenced antibody"/>
</dbReference>
<dbReference type="Antibodypedia" id="2161">
    <property type="antibodies" value="295 antibodies from 28 providers"/>
</dbReference>
<dbReference type="DNASU" id="210274"/>
<dbReference type="Ensembl" id="ENSMUST00000105900.9">
    <molecule id="Q80Z38-2"/>
    <property type="protein sequence ID" value="ENSMUSP00000101520.3"/>
    <property type="gene ID" value="ENSMUSG00000037541.23"/>
</dbReference>
<dbReference type="Ensembl" id="ENSMUST00000146006.3">
    <molecule id="Q80Z38-3"/>
    <property type="protein sequence ID" value="ENSMUSP00000146440.2"/>
    <property type="gene ID" value="ENSMUSG00000037541.23"/>
</dbReference>
<dbReference type="GeneID" id="210274"/>
<dbReference type="KEGG" id="mmu:210274"/>
<dbReference type="UCSC" id="uc009kqe.2">
    <molecule id="Q80Z38-2"/>
    <property type="organism name" value="mouse"/>
</dbReference>
<dbReference type="UCSC" id="uc009kqf.1">
    <molecule id="Q80Z38-3"/>
    <property type="organism name" value="mouse"/>
</dbReference>
<dbReference type="UCSC" id="uc009kqg.1">
    <molecule id="Q80Z38-1"/>
    <property type="organism name" value="mouse"/>
</dbReference>
<dbReference type="AGR" id="MGI:2671987"/>
<dbReference type="CTD" id="22941"/>
<dbReference type="MGI" id="MGI:2671987">
    <property type="gene designation" value="Shank2"/>
</dbReference>
<dbReference type="VEuPathDB" id="HostDB:ENSMUSG00000037541"/>
<dbReference type="eggNOG" id="KOG0504">
    <property type="taxonomic scope" value="Eukaryota"/>
</dbReference>
<dbReference type="eggNOG" id="KOG4375">
    <property type="taxonomic scope" value="Eukaryota"/>
</dbReference>
<dbReference type="GeneTree" id="ENSGT00940000153561"/>
<dbReference type="HOGENOM" id="CLU_001824_0_0_1"/>
<dbReference type="InParanoid" id="Q80Z38"/>
<dbReference type="OrthoDB" id="445896at2759"/>
<dbReference type="BioGRID-ORCS" id="210274">
    <property type="hits" value="1 hit in 61 CRISPR screens"/>
</dbReference>
<dbReference type="CD-CODE" id="CE726F99">
    <property type="entry name" value="Postsynaptic density"/>
</dbReference>
<dbReference type="ChiTaRS" id="Shank2">
    <property type="organism name" value="mouse"/>
</dbReference>
<dbReference type="PRO" id="PR:Q80Z38"/>
<dbReference type="Proteomes" id="UP000000589">
    <property type="component" value="Chromosome 7"/>
</dbReference>
<dbReference type="RNAct" id="Q80Z38">
    <property type="molecule type" value="protein"/>
</dbReference>
<dbReference type="Bgee" id="ENSMUSG00000037541">
    <property type="expression patterns" value="Expressed in primary visual cortex and 108 other cell types or tissues"/>
</dbReference>
<dbReference type="ExpressionAtlas" id="Q80Z38">
    <property type="expression patterns" value="baseline and differential"/>
</dbReference>
<dbReference type="GO" id="GO:0016324">
    <property type="term" value="C:apical plasma membrane"/>
    <property type="evidence" value="ECO:0000250"/>
    <property type="project" value="BHF-UCL"/>
</dbReference>
<dbReference type="GO" id="GO:0031526">
    <property type="term" value="C:brush border membrane"/>
    <property type="evidence" value="ECO:0000250"/>
    <property type="project" value="BHF-UCL"/>
</dbReference>
<dbReference type="GO" id="GO:0060170">
    <property type="term" value="C:ciliary membrane"/>
    <property type="evidence" value="ECO:0000250"/>
    <property type="project" value="BHF-UCL"/>
</dbReference>
<dbReference type="GO" id="GO:0043197">
    <property type="term" value="C:dendritic spine"/>
    <property type="evidence" value="ECO:0000314"/>
    <property type="project" value="BHF-UCL"/>
</dbReference>
<dbReference type="GO" id="GO:0030426">
    <property type="term" value="C:growth cone"/>
    <property type="evidence" value="ECO:0000250"/>
    <property type="project" value="BHF-UCL"/>
</dbReference>
<dbReference type="GO" id="GO:0005883">
    <property type="term" value="C:neurofilament"/>
    <property type="evidence" value="ECO:0000314"/>
    <property type="project" value="CACAO"/>
</dbReference>
<dbReference type="GO" id="GO:0043005">
    <property type="term" value="C:neuron projection"/>
    <property type="evidence" value="ECO:0000314"/>
    <property type="project" value="BHF-UCL"/>
</dbReference>
<dbReference type="GO" id="GO:0043025">
    <property type="term" value="C:neuronal cell body"/>
    <property type="evidence" value="ECO:0000250"/>
    <property type="project" value="BHF-UCL"/>
</dbReference>
<dbReference type="GO" id="GO:0001917">
    <property type="term" value="C:photoreceptor inner segment"/>
    <property type="evidence" value="ECO:0000314"/>
    <property type="project" value="BHF-UCL"/>
</dbReference>
<dbReference type="GO" id="GO:0001750">
    <property type="term" value="C:photoreceptor outer segment"/>
    <property type="evidence" value="ECO:0000314"/>
    <property type="project" value="BHF-UCL"/>
</dbReference>
<dbReference type="GO" id="GO:0005886">
    <property type="term" value="C:plasma membrane"/>
    <property type="evidence" value="ECO:0000314"/>
    <property type="project" value="BHF-UCL"/>
</dbReference>
<dbReference type="GO" id="GO:0014069">
    <property type="term" value="C:postsynaptic density"/>
    <property type="evidence" value="ECO:0000250"/>
    <property type="project" value="BHF-UCL"/>
</dbReference>
<dbReference type="GO" id="GO:0048786">
    <property type="term" value="C:presynaptic active zone"/>
    <property type="evidence" value="ECO:0000266"/>
    <property type="project" value="MGI"/>
</dbReference>
<dbReference type="GO" id="GO:0035255">
    <property type="term" value="F:ionotropic glutamate receptor binding"/>
    <property type="evidence" value="ECO:0000353"/>
    <property type="project" value="BHF-UCL"/>
</dbReference>
<dbReference type="GO" id="GO:0017124">
    <property type="term" value="F:SH3 domain binding"/>
    <property type="evidence" value="ECO:0007669"/>
    <property type="project" value="UniProtKB-KW"/>
</dbReference>
<dbReference type="GO" id="GO:0030534">
    <property type="term" value="P:adult behavior"/>
    <property type="evidence" value="ECO:0000315"/>
    <property type="project" value="BHF-UCL"/>
</dbReference>
<dbReference type="GO" id="GO:0035640">
    <property type="term" value="P:exploration behavior"/>
    <property type="evidence" value="ECO:0000315"/>
    <property type="project" value="BHF-UCL"/>
</dbReference>
<dbReference type="GO" id="GO:0007612">
    <property type="term" value="P:learning"/>
    <property type="evidence" value="ECO:0000315"/>
    <property type="project" value="BHF-UCL"/>
</dbReference>
<dbReference type="GO" id="GO:0060292">
    <property type="term" value="P:long-term synaptic depression"/>
    <property type="evidence" value="ECO:0000315"/>
    <property type="project" value="BHF-UCL"/>
</dbReference>
<dbReference type="GO" id="GO:0060291">
    <property type="term" value="P:long-term synaptic potentiation"/>
    <property type="evidence" value="ECO:0000315"/>
    <property type="project" value="BHF-UCL"/>
</dbReference>
<dbReference type="GO" id="GO:0007613">
    <property type="term" value="P:memory"/>
    <property type="evidence" value="ECO:0000315"/>
    <property type="project" value="BHF-UCL"/>
</dbReference>
<dbReference type="GO" id="GO:0051968">
    <property type="term" value="P:positive regulation of synaptic transmission, glutamatergic"/>
    <property type="evidence" value="ECO:0000315"/>
    <property type="project" value="CACAO"/>
</dbReference>
<dbReference type="GO" id="GO:0035176">
    <property type="term" value="P:social behavior"/>
    <property type="evidence" value="ECO:0000315"/>
    <property type="project" value="BHF-UCL"/>
</dbReference>
<dbReference type="GO" id="GO:0007416">
    <property type="term" value="P:synapse assembly"/>
    <property type="evidence" value="ECO:0000315"/>
    <property type="project" value="BHF-UCL"/>
</dbReference>
<dbReference type="GO" id="GO:0071625">
    <property type="term" value="P:vocalization behavior"/>
    <property type="evidence" value="ECO:0000315"/>
    <property type="project" value="BHF-UCL"/>
</dbReference>
<dbReference type="CDD" id="cd06746">
    <property type="entry name" value="PDZ_SHANK1_3-like"/>
    <property type="match status" value="1"/>
</dbReference>
<dbReference type="CDD" id="cd09506">
    <property type="entry name" value="SAM_Shank1_2_3"/>
    <property type="match status" value="1"/>
</dbReference>
<dbReference type="CDD" id="cd11983">
    <property type="entry name" value="SH3_Shank2"/>
    <property type="match status" value="1"/>
</dbReference>
<dbReference type="FunFam" id="1.10.150.50:FF:000006">
    <property type="entry name" value="SH3 and multiple ankyrin repeat domains protein 2"/>
    <property type="match status" value="1"/>
</dbReference>
<dbReference type="FunFam" id="2.30.30.40:FF:000025">
    <property type="entry name" value="SH3 and multiple ankyrin repeat domains protein 2"/>
    <property type="match status" value="1"/>
</dbReference>
<dbReference type="FunFam" id="2.30.42.10:FF:000018">
    <property type="entry name" value="SH3 and multiple ankyrin repeat domains protein 2"/>
    <property type="match status" value="1"/>
</dbReference>
<dbReference type="Gene3D" id="2.30.42.10">
    <property type="match status" value="1"/>
</dbReference>
<dbReference type="Gene3D" id="2.30.30.40">
    <property type="entry name" value="SH3 Domains"/>
    <property type="match status" value="1"/>
</dbReference>
<dbReference type="Gene3D" id="1.10.150.50">
    <property type="entry name" value="Transcription Factor, Ets-1"/>
    <property type="match status" value="1"/>
</dbReference>
<dbReference type="InterPro" id="IPR001478">
    <property type="entry name" value="PDZ"/>
</dbReference>
<dbReference type="InterPro" id="IPR041489">
    <property type="entry name" value="PDZ_6"/>
</dbReference>
<dbReference type="InterPro" id="IPR036034">
    <property type="entry name" value="PDZ_sf"/>
</dbReference>
<dbReference type="InterPro" id="IPR001660">
    <property type="entry name" value="SAM"/>
</dbReference>
<dbReference type="InterPro" id="IPR013761">
    <property type="entry name" value="SAM/pointed_sf"/>
</dbReference>
<dbReference type="InterPro" id="IPR036028">
    <property type="entry name" value="SH3-like_dom_sf"/>
</dbReference>
<dbReference type="InterPro" id="IPR001452">
    <property type="entry name" value="SH3_domain"/>
</dbReference>
<dbReference type="InterPro" id="IPR051569">
    <property type="entry name" value="SHANK"/>
</dbReference>
<dbReference type="PANTHER" id="PTHR24135">
    <property type="entry name" value="SH3 AND MULTIPLE ANKYRIN REPEAT DOMAINS PROTEIN"/>
    <property type="match status" value="1"/>
</dbReference>
<dbReference type="PANTHER" id="PTHR24135:SF17">
    <property type="entry name" value="SH3 AND MULTIPLE ANKYRIN REPEAT DOMAINS PROTEIN 2"/>
    <property type="match status" value="1"/>
</dbReference>
<dbReference type="Pfam" id="PF17820">
    <property type="entry name" value="PDZ_6"/>
    <property type="match status" value="1"/>
</dbReference>
<dbReference type="Pfam" id="PF00536">
    <property type="entry name" value="SAM_1"/>
    <property type="match status" value="1"/>
</dbReference>
<dbReference type="Pfam" id="PF07653">
    <property type="entry name" value="SH3_2"/>
    <property type="match status" value="1"/>
</dbReference>
<dbReference type="SMART" id="SM00228">
    <property type="entry name" value="PDZ"/>
    <property type="match status" value="1"/>
</dbReference>
<dbReference type="SMART" id="SM00454">
    <property type="entry name" value="SAM"/>
    <property type="match status" value="1"/>
</dbReference>
<dbReference type="SMART" id="SM00326">
    <property type="entry name" value="SH3"/>
    <property type="match status" value="1"/>
</dbReference>
<dbReference type="SUPFAM" id="SSF50156">
    <property type="entry name" value="PDZ domain-like"/>
    <property type="match status" value="1"/>
</dbReference>
<dbReference type="SUPFAM" id="SSF47769">
    <property type="entry name" value="SAM/Pointed domain"/>
    <property type="match status" value="1"/>
</dbReference>
<dbReference type="SUPFAM" id="SSF50044">
    <property type="entry name" value="SH3-domain"/>
    <property type="match status" value="1"/>
</dbReference>
<dbReference type="PROSITE" id="PS50106">
    <property type="entry name" value="PDZ"/>
    <property type="match status" value="1"/>
</dbReference>
<dbReference type="PROSITE" id="PS50105">
    <property type="entry name" value="SAM_DOMAIN"/>
    <property type="match status" value="1"/>
</dbReference>
<dbReference type="PROSITE" id="PS50002">
    <property type="entry name" value="SH3"/>
    <property type="match status" value="1"/>
</dbReference>
<proteinExistence type="evidence at protein level"/>
<feature type="chain" id="PRO_0000247760" description="SH3 and multiple ankyrin repeat domains protein 2">
    <location>
        <begin position="1"/>
        <end position="1476"/>
    </location>
</feature>
<feature type="domain" description="SH3" evidence="5">
    <location>
        <begin position="147"/>
        <end position="206"/>
    </location>
</feature>
<feature type="domain" description="PDZ" evidence="3">
    <location>
        <begin position="247"/>
        <end position="341"/>
    </location>
</feature>
<feature type="domain" description="SAM" evidence="4">
    <location>
        <begin position="1413"/>
        <end position="1476"/>
    </location>
</feature>
<feature type="region of interest" description="Disordered" evidence="6">
    <location>
        <begin position="66"/>
        <end position="134"/>
    </location>
</feature>
<feature type="region of interest" description="Disordered" evidence="6">
    <location>
        <begin position="391"/>
        <end position="412"/>
    </location>
</feature>
<feature type="region of interest" description="Disordered" evidence="6">
    <location>
        <begin position="503"/>
        <end position="533"/>
    </location>
</feature>
<feature type="region of interest" description="Disordered" evidence="6">
    <location>
        <begin position="659"/>
        <end position="916"/>
    </location>
</feature>
<feature type="region of interest" description="Disordered" evidence="6">
    <location>
        <begin position="946"/>
        <end position="983"/>
    </location>
</feature>
<feature type="region of interest" description="Disordered" evidence="6">
    <location>
        <begin position="1057"/>
        <end position="1153"/>
    </location>
</feature>
<feature type="region of interest" description="Disordered" evidence="6">
    <location>
        <begin position="1195"/>
        <end position="1216"/>
    </location>
</feature>
<feature type="region of interest" description="Disordered" evidence="6">
    <location>
        <begin position="1260"/>
        <end position="1403"/>
    </location>
</feature>
<feature type="short sequence motif" description="SH3-binding" evidence="2">
    <location>
        <begin position="1169"/>
        <end position="1175"/>
    </location>
</feature>
<feature type="compositionally biased region" description="Polar residues" evidence="6">
    <location>
        <begin position="66"/>
        <end position="76"/>
    </location>
</feature>
<feature type="compositionally biased region" description="Pro residues" evidence="6">
    <location>
        <begin position="512"/>
        <end position="528"/>
    </location>
</feature>
<feature type="compositionally biased region" description="Low complexity" evidence="6">
    <location>
        <begin position="666"/>
        <end position="678"/>
    </location>
</feature>
<feature type="compositionally biased region" description="Basic and acidic residues" evidence="6">
    <location>
        <begin position="711"/>
        <end position="722"/>
    </location>
</feature>
<feature type="compositionally biased region" description="Gly residues" evidence="6">
    <location>
        <begin position="783"/>
        <end position="795"/>
    </location>
</feature>
<feature type="compositionally biased region" description="Low complexity" evidence="6">
    <location>
        <begin position="833"/>
        <end position="846"/>
    </location>
</feature>
<feature type="compositionally biased region" description="Basic and acidic residues" evidence="6">
    <location>
        <begin position="847"/>
        <end position="868"/>
    </location>
</feature>
<feature type="compositionally biased region" description="Basic and acidic residues" evidence="6">
    <location>
        <begin position="899"/>
        <end position="916"/>
    </location>
</feature>
<feature type="compositionally biased region" description="Polar residues" evidence="6">
    <location>
        <begin position="1070"/>
        <end position="1085"/>
    </location>
</feature>
<feature type="compositionally biased region" description="Basic and acidic residues" evidence="6">
    <location>
        <begin position="1119"/>
        <end position="1130"/>
    </location>
</feature>
<feature type="compositionally biased region" description="Low complexity" evidence="6">
    <location>
        <begin position="1131"/>
        <end position="1151"/>
    </location>
</feature>
<feature type="compositionally biased region" description="Pro residues" evidence="6">
    <location>
        <begin position="1202"/>
        <end position="1212"/>
    </location>
</feature>
<feature type="compositionally biased region" description="Low complexity" evidence="6">
    <location>
        <begin position="1291"/>
        <end position="1305"/>
    </location>
</feature>
<feature type="compositionally biased region" description="Polar residues" evidence="6">
    <location>
        <begin position="1307"/>
        <end position="1317"/>
    </location>
</feature>
<feature type="compositionally biased region" description="Polar residues" evidence="6">
    <location>
        <begin position="1364"/>
        <end position="1375"/>
    </location>
</feature>
<feature type="compositionally biased region" description="Low complexity" evidence="6">
    <location>
        <begin position="1387"/>
        <end position="1401"/>
    </location>
</feature>
<feature type="modified residue" description="Phosphoserine" evidence="17">
    <location>
        <position position="456"/>
    </location>
</feature>
<feature type="modified residue" description="Phosphothreonine" evidence="17">
    <location>
        <position position="485"/>
    </location>
</feature>
<feature type="modified residue" description="Phosphoserine" evidence="16 17">
    <location>
        <position position="586"/>
    </location>
</feature>
<feature type="modified residue" description="Phosphoserine" evidence="17">
    <location>
        <position position="724"/>
    </location>
</feature>
<feature type="modified residue" description="Phosphothreonine" evidence="16">
    <location>
        <position position="903"/>
    </location>
</feature>
<feature type="modified residue" description="Phosphoserine" evidence="17">
    <location>
        <position position="1334"/>
    </location>
</feature>
<feature type="modified residue" description="Phosphoserine" evidence="17">
    <location>
        <position position="1338"/>
    </location>
</feature>
<feature type="glycosylation site" description="O-linked (GlcNAc) threonine" evidence="8">
    <location>
        <position position="1292"/>
    </location>
</feature>
<feature type="splice variant" id="VSP_041614" description="In isoform 3." evidence="13">
    <location>
        <begin position="1"/>
        <end position="210"/>
    </location>
</feature>
<feature type="splice variant" id="VSP_041615" description="In isoform 3." evidence="13">
    <original>SQAETRADRSKKLFRHYTVGSYDSFDAA</original>
    <variation>MMSVPGGGAATVMMTGYNNGRYPRNSLY</variation>
    <location>
        <begin position="211"/>
        <end position="238"/>
    </location>
</feature>
<feature type="splice variant" id="VSP_020040" description="In isoform 2 and isoform 3." evidence="13 14">
    <location>
        <begin position="380"/>
        <end position="383"/>
    </location>
</feature>
<feature type="sequence conflict" description="In Ref. 1; BAC58120 and 5; BAD90424." evidence="15" ref="1 5">
    <original>S</original>
    <variation>P</variation>
    <location>
        <position position="1071"/>
    </location>
</feature>
<feature type="modified residue" description="Phosphoserine" evidence="17">
    <location sequence="Q80Z38-2">
        <position position="372"/>
    </location>
</feature>
<feature type="modified residue" description="Phosphoserine" evidence="17">
    <location sequence="Q80Z38-3">
        <position position="162"/>
    </location>
</feature>
<reference key="1">
    <citation type="journal article" date="2004" name="Mol. Cell. Neurosci.">
        <title>Direct interaction of GluRdelta2 with Shank scaffold proteins in cerebellar Purkinje cells.</title>
        <authorList>
            <person name="Uemura T."/>
            <person name="Mori H."/>
            <person name="Mishina M."/>
        </authorList>
    </citation>
    <scope>NUCLEOTIDE SEQUENCE [MRNA] (ISOFORM 1)</scope>
    <scope>SUBCELLULAR LOCATION</scope>
    <scope>INTERACTION WITH GRID2</scope>
</reference>
<reference key="2">
    <citation type="journal article" date="2009" name="PLoS Biol.">
        <title>Lineage-specific biology revealed by a finished genome assembly of the mouse.</title>
        <authorList>
            <person name="Church D.M."/>
            <person name="Goodstadt L."/>
            <person name="Hillier L.W."/>
            <person name="Zody M.C."/>
            <person name="Goldstein S."/>
            <person name="She X."/>
            <person name="Bult C.J."/>
            <person name="Agarwala R."/>
            <person name="Cherry J.L."/>
            <person name="DiCuccio M."/>
            <person name="Hlavina W."/>
            <person name="Kapustin Y."/>
            <person name="Meric P."/>
            <person name="Maglott D."/>
            <person name="Birtle Z."/>
            <person name="Marques A.C."/>
            <person name="Graves T."/>
            <person name="Zhou S."/>
            <person name="Teague B."/>
            <person name="Potamousis K."/>
            <person name="Churas C."/>
            <person name="Place M."/>
            <person name="Herschleb J."/>
            <person name="Runnheim R."/>
            <person name="Forrest D."/>
            <person name="Amos-Landgraf J."/>
            <person name="Schwartz D.C."/>
            <person name="Cheng Z."/>
            <person name="Lindblad-Toh K."/>
            <person name="Eichler E.E."/>
            <person name="Ponting C.P."/>
        </authorList>
    </citation>
    <scope>NUCLEOTIDE SEQUENCE [LARGE SCALE GENOMIC DNA]</scope>
    <source>
        <strain>C57BL/6J</strain>
    </source>
</reference>
<reference key="3">
    <citation type="journal article" date="2004" name="Genome Res.">
        <title>The status, quality, and expansion of the NIH full-length cDNA project: the Mammalian Gene Collection (MGC).</title>
        <authorList>
            <consortium name="The MGC Project Team"/>
        </authorList>
    </citation>
    <scope>NUCLEOTIDE SEQUENCE [LARGE SCALE MRNA] (ISOFORM 3)</scope>
</reference>
<reference key="4">
    <citation type="journal article" date="2005" name="Science">
        <title>The transcriptional landscape of the mammalian genome.</title>
        <authorList>
            <person name="Carninci P."/>
            <person name="Kasukawa T."/>
            <person name="Katayama S."/>
            <person name="Gough J."/>
            <person name="Frith M.C."/>
            <person name="Maeda N."/>
            <person name="Oyama R."/>
            <person name="Ravasi T."/>
            <person name="Lenhard B."/>
            <person name="Wells C."/>
            <person name="Kodzius R."/>
            <person name="Shimokawa K."/>
            <person name="Bajic V.B."/>
            <person name="Brenner S.E."/>
            <person name="Batalov S."/>
            <person name="Forrest A.R."/>
            <person name="Zavolan M."/>
            <person name="Davis M.J."/>
            <person name="Wilming L.G."/>
            <person name="Aidinis V."/>
            <person name="Allen J.E."/>
            <person name="Ambesi-Impiombato A."/>
            <person name="Apweiler R."/>
            <person name="Aturaliya R.N."/>
            <person name="Bailey T.L."/>
            <person name="Bansal M."/>
            <person name="Baxter L."/>
            <person name="Beisel K.W."/>
            <person name="Bersano T."/>
            <person name="Bono H."/>
            <person name="Chalk A.M."/>
            <person name="Chiu K.P."/>
            <person name="Choudhary V."/>
            <person name="Christoffels A."/>
            <person name="Clutterbuck D.R."/>
            <person name="Crowe M.L."/>
            <person name="Dalla E."/>
            <person name="Dalrymple B.P."/>
            <person name="de Bono B."/>
            <person name="Della Gatta G."/>
            <person name="di Bernardo D."/>
            <person name="Down T."/>
            <person name="Engstrom P."/>
            <person name="Fagiolini M."/>
            <person name="Faulkner G."/>
            <person name="Fletcher C.F."/>
            <person name="Fukushima T."/>
            <person name="Furuno M."/>
            <person name="Futaki S."/>
            <person name="Gariboldi M."/>
            <person name="Georgii-Hemming P."/>
            <person name="Gingeras T.R."/>
            <person name="Gojobori T."/>
            <person name="Green R.E."/>
            <person name="Gustincich S."/>
            <person name="Harbers M."/>
            <person name="Hayashi Y."/>
            <person name="Hensch T.K."/>
            <person name="Hirokawa N."/>
            <person name="Hill D."/>
            <person name="Huminiecki L."/>
            <person name="Iacono M."/>
            <person name="Ikeo K."/>
            <person name="Iwama A."/>
            <person name="Ishikawa T."/>
            <person name="Jakt M."/>
            <person name="Kanapin A."/>
            <person name="Katoh M."/>
            <person name="Kawasawa Y."/>
            <person name="Kelso J."/>
            <person name="Kitamura H."/>
            <person name="Kitano H."/>
            <person name="Kollias G."/>
            <person name="Krishnan S.P."/>
            <person name="Kruger A."/>
            <person name="Kummerfeld S.K."/>
            <person name="Kurochkin I.V."/>
            <person name="Lareau L.F."/>
            <person name="Lazarevic D."/>
            <person name="Lipovich L."/>
            <person name="Liu J."/>
            <person name="Liuni S."/>
            <person name="McWilliam S."/>
            <person name="Madan Babu M."/>
            <person name="Madera M."/>
            <person name="Marchionni L."/>
            <person name="Matsuda H."/>
            <person name="Matsuzawa S."/>
            <person name="Miki H."/>
            <person name="Mignone F."/>
            <person name="Miyake S."/>
            <person name="Morris K."/>
            <person name="Mottagui-Tabar S."/>
            <person name="Mulder N."/>
            <person name="Nakano N."/>
            <person name="Nakauchi H."/>
            <person name="Ng P."/>
            <person name="Nilsson R."/>
            <person name="Nishiguchi S."/>
            <person name="Nishikawa S."/>
            <person name="Nori F."/>
            <person name="Ohara O."/>
            <person name="Okazaki Y."/>
            <person name="Orlando V."/>
            <person name="Pang K.C."/>
            <person name="Pavan W.J."/>
            <person name="Pavesi G."/>
            <person name="Pesole G."/>
            <person name="Petrovsky N."/>
            <person name="Piazza S."/>
            <person name="Reed J."/>
            <person name="Reid J.F."/>
            <person name="Ring B.Z."/>
            <person name="Ringwald M."/>
            <person name="Rost B."/>
            <person name="Ruan Y."/>
            <person name="Salzberg S.L."/>
            <person name="Sandelin A."/>
            <person name="Schneider C."/>
            <person name="Schoenbach C."/>
            <person name="Sekiguchi K."/>
            <person name="Semple C.A."/>
            <person name="Seno S."/>
            <person name="Sessa L."/>
            <person name="Sheng Y."/>
            <person name="Shibata Y."/>
            <person name="Shimada H."/>
            <person name="Shimada K."/>
            <person name="Silva D."/>
            <person name="Sinclair B."/>
            <person name="Sperling S."/>
            <person name="Stupka E."/>
            <person name="Sugiura K."/>
            <person name="Sultana R."/>
            <person name="Takenaka Y."/>
            <person name="Taki K."/>
            <person name="Tammoja K."/>
            <person name="Tan S.L."/>
            <person name="Tang S."/>
            <person name="Taylor M.S."/>
            <person name="Tegner J."/>
            <person name="Teichmann S.A."/>
            <person name="Ueda H.R."/>
            <person name="van Nimwegen E."/>
            <person name="Verardo R."/>
            <person name="Wei C.L."/>
            <person name="Yagi K."/>
            <person name="Yamanishi H."/>
            <person name="Zabarovsky E."/>
            <person name="Zhu S."/>
            <person name="Zimmer A."/>
            <person name="Hide W."/>
            <person name="Bult C."/>
            <person name="Grimmond S.M."/>
            <person name="Teasdale R.D."/>
            <person name="Liu E.T."/>
            <person name="Brusic V."/>
            <person name="Quackenbush J."/>
            <person name="Wahlestedt C."/>
            <person name="Mattick J.S."/>
            <person name="Hume D.A."/>
            <person name="Kai C."/>
            <person name="Sasaki D."/>
            <person name="Tomaru Y."/>
            <person name="Fukuda S."/>
            <person name="Kanamori-Katayama M."/>
            <person name="Suzuki M."/>
            <person name="Aoki J."/>
            <person name="Arakawa T."/>
            <person name="Iida J."/>
            <person name="Imamura K."/>
            <person name="Itoh M."/>
            <person name="Kato T."/>
            <person name="Kawaji H."/>
            <person name="Kawagashira N."/>
            <person name="Kawashima T."/>
            <person name="Kojima M."/>
            <person name="Kondo S."/>
            <person name="Konno H."/>
            <person name="Nakano K."/>
            <person name="Ninomiya N."/>
            <person name="Nishio T."/>
            <person name="Okada M."/>
            <person name="Plessy C."/>
            <person name="Shibata K."/>
            <person name="Shiraki T."/>
            <person name="Suzuki S."/>
            <person name="Tagami M."/>
            <person name="Waki K."/>
            <person name="Watahiki A."/>
            <person name="Okamura-Oho Y."/>
            <person name="Suzuki H."/>
            <person name="Kawai J."/>
            <person name="Hayashizaki Y."/>
        </authorList>
    </citation>
    <scope>NUCLEOTIDE SEQUENCE [LARGE SCALE MRNA] OF 1-350 (ISOFORMS 1/2)</scope>
    <source>
        <strain>C57BL/6J</strain>
        <tissue>Brain cortex</tissue>
    </source>
</reference>
<reference key="5">
    <citation type="submission" date="2005-02" db="EMBL/GenBank/DDBJ databases">
        <title>Prediction of the coding sequences of mouse homologues of KIAA gene. The complete nucleotide sequences of mouse KIAA-homologous cDNAs identified by screening of terminal sequences of cDNA clones randomly sampled from size-fractionated libraries.</title>
        <authorList>
            <person name="Okazaki N."/>
            <person name="Kikuno R.F."/>
            <person name="Ohara R."/>
            <person name="Inamoto S."/>
            <person name="Nagase T."/>
            <person name="Ohara O."/>
            <person name="Koga H."/>
        </authorList>
    </citation>
    <scope>NUCLEOTIDE SEQUENCE [LARGE SCALE MRNA] OF 345-1476 (ISOFORM 2)</scope>
    <source>
        <tissue>Fetal brain</tissue>
    </source>
</reference>
<reference key="6">
    <citation type="journal article" date="1998" name="Mol. Cell. Biol.">
        <title>Identification of a novel cortactin SH3 domain-binding protein and its localization to growth cones of cultured neurons.</title>
        <authorList>
            <person name="Du Y."/>
            <person name="Weed S.A."/>
            <person name="Xiong W.-C."/>
            <person name="Marshall T.D."/>
            <person name="Parsons J.T."/>
        </authorList>
    </citation>
    <scope>TISSUE SPECIFICITY</scope>
</reference>
<reference key="7">
    <citation type="journal article" date="2006" name="Mol. Cell. Proteomics">
        <title>Comprehensive identification of phosphorylation sites in postsynaptic density preparations.</title>
        <authorList>
            <person name="Trinidad J.C."/>
            <person name="Specht C.G."/>
            <person name="Thalhammer A."/>
            <person name="Schoepfer R."/>
            <person name="Burlingame A.L."/>
        </authorList>
    </citation>
    <scope>PHOSPHORYLATION [LARGE SCALE ANALYSIS] AT SER-586 AND THR-903</scope>
    <scope>IDENTIFICATION BY MASS SPECTROMETRY [LARGE SCALE ANALYSIS]</scope>
    <source>
        <tissue>Brain</tissue>
    </source>
</reference>
<reference key="8">
    <citation type="journal article" date="2006" name="Mol. Cell. Proteomics">
        <title>O-linked N-acetylglucosamine proteomics of postsynaptic density preparations using lectin weak affinity chromatography and mass spectrometry.</title>
        <authorList>
            <person name="Vosseller K."/>
            <person name="Trinidad J.C."/>
            <person name="Chalkley R.J."/>
            <person name="Specht C.G."/>
            <person name="Thalhammer A."/>
            <person name="Lynn A.J."/>
            <person name="Snedecor J.O."/>
            <person name="Guan S."/>
            <person name="Medzihradszky K.F."/>
            <person name="Maltby D.A."/>
            <person name="Schoepfer R."/>
            <person name="Burlingame A.L."/>
        </authorList>
    </citation>
    <scope>GLYCOSYLATION [LARGE SCALE ANALYSIS] AT THR-1292</scope>
    <source>
        <tissue>Brain</tissue>
    </source>
</reference>
<reference key="9">
    <citation type="journal article" date="2007" name="J. Biol. Chem.">
        <title>Dynamic regulation of cystic fibrosis transmembrane conductance regulator by competitive interactions of molecular adaptors.</title>
        <authorList>
            <person name="Lee J.H."/>
            <person name="Richter W."/>
            <person name="Namkung W."/>
            <person name="Kim K.H."/>
            <person name="Kim E."/>
            <person name="Conti M."/>
            <person name="Lee M.G."/>
        </authorList>
    </citation>
    <scope>INTERACTION WITH PDE4D</scope>
    <scope>TISSUE SPECIFICITY</scope>
</reference>
<reference key="10">
    <citation type="journal article" date="2010" name="Cell">
        <title>A tissue-specific atlas of mouse protein phosphorylation and expression.</title>
        <authorList>
            <person name="Huttlin E.L."/>
            <person name="Jedrychowski M.P."/>
            <person name="Elias J.E."/>
            <person name="Goswami T."/>
            <person name="Rad R."/>
            <person name="Beausoleil S.A."/>
            <person name="Villen J."/>
            <person name="Haas W."/>
            <person name="Sowa M.E."/>
            <person name="Gygi S.P."/>
        </authorList>
    </citation>
    <scope>PHOSPHORYLATION [LARGE SCALE ANALYSIS] AT SER-456; THR-485; SER-586; SER-724; SER-1334 AND SER-1338</scope>
    <scope>PHOSPHORYLATION [LARGE SCALE ANALYSIS] AT SER-372 (ISOFORM 2)</scope>
    <scope>PHOSPHORYLATION [LARGE SCALE ANALYSIS] AT SER-162 (ISOFORM 3)</scope>
    <scope>IDENTIFICATION BY MASS SPECTROMETRY [LARGE SCALE ANALYSIS]</scope>
    <source>
        <tissue>Brain</tissue>
        <tissue>Kidney</tissue>
        <tissue>Pancreas</tissue>
    </source>
</reference>
<reference key="11">
    <citation type="journal article" date="2011" name="Nature">
        <title>Shank3 mutant mice display autistic-like behaviours and striatal dysfunction.</title>
        <authorList>
            <person name="Peca J."/>
            <person name="Feliciano C."/>
            <person name="Ting J.T."/>
            <person name="Wang W."/>
            <person name="Wells M.F."/>
            <person name="Venkatraman T.N."/>
            <person name="Lascola C.D."/>
            <person name="Fu Z."/>
            <person name="Feng G."/>
        </authorList>
    </citation>
    <scope>TISSUE SPECIFICITY</scope>
</reference>
<reference key="12">
    <citation type="journal article" date="2012" name="Nature">
        <title>Autistic-like behaviours and hyperactivity in mice lacking ProSAP1/Shank2.</title>
        <authorList>
            <person name="Schmeisser M.J."/>
            <person name="Ey E."/>
            <person name="Wegener S."/>
            <person name="Bockmann J."/>
            <person name="Stempel A.V."/>
            <person name="Kuebler A."/>
            <person name="Janssen A.L."/>
            <person name="Udvardi P.T."/>
            <person name="Shiban E."/>
            <person name="Spilker C."/>
            <person name="Balschun D."/>
            <person name="Skryabin B.V."/>
            <person name="Dieck S.T."/>
            <person name="Smalla K.H."/>
            <person name="Montag D."/>
            <person name="Leblond C.S."/>
            <person name="Faure P."/>
            <person name="Torquet N."/>
            <person name="Le Sourd A.M."/>
            <person name="Toro R."/>
            <person name="Grabrucker A.M."/>
            <person name="Shoichet S.A."/>
            <person name="Schmitz D."/>
            <person name="Kreutz M.R."/>
            <person name="Bourgeron T."/>
            <person name="Gundelfinger E.D."/>
            <person name="Boeckers T.M."/>
        </authorList>
    </citation>
    <scope>DISRUPTION PHENOTYPE</scope>
</reference>
<keyword id="KW-0025">Alternative splicing</keyword>
<keyword id="KW-1003">Cell membrane</keyword>
<keyword id="KW-0966">Cell projection</keyword>
<keyword id="KW-0963">Cytoplasm</keyword>
<keyword id="KW-0325">Glycoprotein</keyword>
<keyword id="KW-0472">Membrane</keyword>
<keyword id="KW-0597">Phosphoprotein</keyword>
<keyword id="KW-1185">Reference proteome</keyword>
<keyword id="KW-0728">SH3 domain</keyword>
<keyword id="KW-0729">SH3-binding</keyword>
<keyword id="KW-0770">Synapse</keyword>
<protein>
    <recommendedName>
        <fullName>SH3 and multiple ankyrin repeat domains protein 2</fullName>
        <shortName>Shank2</shortName>
    </recommendedName>
    <alternativeName>
        <fullName>Cortactin-binding protein 1</fullName>
        <shortName>CortBP1</shortName>
    </alternativeName>
</protein>
<gene>
    <name type="primary">Shank2</name>
    <name type="synonym">Cortbp1</name>
    <name type="synonym">Kiaa1022</name>
</gene>
<name>SHAN2_MOUSE</name>
<evidence type="ECO:0000250" key="1"/>
<evidence type="ECO:0000255" key="2"/>
<evidence type="ECO:0000255" key="3">
    <source>
        <dbReference type="PROSITE-ProRule" id="PRU00143"/>
    </source>
</evidence>
<evidence type="ECO:0000255" key="4">
    <source>
        <dbReference type="PROSITE-ProRule" id="PRU00184"/>
    </source>
</evidence>
<evidence type="ECO:0000255" key="5">
    <source>
        <dbReference type="PROSITE-ProRule" id="PRU00192"/>
    </source>
</evidence>
<evidence type="ECO:0000256" key="6">
    <source>
        <dbReference type="SAM" id="MobiDB-lite"/>
    </source>
</evidence>
<evidence type="ECO:0000269" key="7">
    <source>
    </source>
</evidence>
<evidence type="ECO:0000269" key="8">
    <source>
    </source>
</evidence>
<evidence type="ECO:0000269" key="9">
    <source>
    </source>
</evidence>
<evidence type="ECO:0000269" key="10">
    <source>
    </source>
</evidence>
<evidence type="ECO:0000269" key="11">
    <source>
    </source>
</evidence>
<evidence type="ECO:0000269" key="12">
    <source>
    </source>
</evidence>
<evidence type="ECO:0000303" key="13">
    <source>
    </source>
</evidence>
<evidence type="ECO:0000303" key="14">
    <source ref="5"/>
</evidence>
<evidence type="ECO:0000305" key="15"/>
<evidence type="ECO:0007744" key="16">
    <source>
    </source>
</evidence>
<evidence type="ECO:0007744" key="17">
    <source>
    </source>
</evidence>
<accession>Q80Z38</accession>
<accession>E9QPH7</accession>
<accession>Q3UTK4</accession>
<accession>Q5DU07</accession>